<evidence type="ECO:0000250" key="1">
    <source>
        <dbReference type="UniProtKB" id="Q9GZT8"/>
    </source>
</evidence>
<evidence type="ECO:0000269" key="2">
    <source>
    </source>
</evidence>
<evidence type="ECO:0000269" key="3">
    <source>
    </source>
</evidence>
<evidence type="ECO:0000269" key="4">
    <source>
    </source>
</evidence>
<evidence type="ECO:0000305" key="5"/>
<evidence type="ECO:0000305" key="6">
    <source>
    </source>
</evidence>
<evidence type="ECO:0000312" key="7">
    <source>
        <dbReference type="MGI" id="MGI:1929485"/>
    </source>
</evidence>
<evidence type="ECO:0007744" key="8">
    <source>
    </source>
</evidence>
<proteinExistence type="evidence at protein level"/>
<feature type="chain" id="PRO_0000147354" description="NIF3-like protein 1">
    <location>
        <begin position="1"/>
        <end position="376"/>
    </location>
</feature>
<feature type="region of interest" description="Mediates interaction with COPS2" evidence="3">
    <location>
        <begin position="243"/>
        <end position="376"/>
    </location>
</feature>
<feature type="modified residue" description="N6-acetyllysine" evidence="1">
    <location>
        <position position="108"/>
    </location>
</feature>
<feature type="modified residue" description="Phosphothreonine" evidence="8">
    <location>
        <position position="254"/>
    </location>
</feature>
<feature type="modified residue" description="Phosphoserine" evidence="8">
    <location>
        <position position="258"/>
    </location>
</feature>
<feature type="sequence conflict" description="In Ref. 1; AAG45961." evidence="5" ref="1">
    <original>L</original>
    <variation>I</variation>
    <location>
        <position position="7"/>
    </location>
</feature>
<feature type="sequence conflict" description="In Ref. 2; BAB27769." evidence="5" ref="2">
    <original>G</original>
    <variation>S</variation>
    <location>
        <position position="190"/>
    </location>
</feature>
<feature type="sequence conflict" description="In Ref. 2; BAB27769." evidence="5" ref="2">
    <original>E</original>
    <variation>K</variation>
    <location>
        <position position="204"/>
    </location>
</feature>
<feature type="sequence conflict" description="In Ref. 2; BAB27769." evidence="5" ref="2">
    <original>L</original>
    <variation>F</variation>
    <location>
        <position position="217"/>
    </location>
</feature>
<feature type="sequence conflict" description="In Ref. 2; BAB27769." evidence="5" ref="2">
    <original>L</original>
    <variation>Q</variation>
    <location>
        <position position="221"/>
    </location>
</feature>
<feature type="sequence conflict" description="In Ref. 2; BAB27769." evidence="5" ref="2">
    <original>L</original>
    <variation>F</variation>
    <location>
        <position position="224"/>
    </location>
</feature>
<feature type="sequence conflict" description="In Ref. 2; BAB27769." evidence="5" ref="2">
    <original>T</original>
    <variation>I</variation>
    <location>
        <position position="234"/>
    </location>
</feature>
<sequence length="376" mass="41746">MLSSAHLVPTSVQRAQSWICRSSRSFMDLKALLSSLNDFASLSFAESWDNVGLLVEPSPPHTVNTLFLTNDLTEEVMDEALQKKADFILSYHPPIFRPMKHITWKTWKECLVIRALENRVAVYSPHTAYDAAPQGVNSWLAKGLGTCTTRPIHPSRAPDYPTEGAHRLEFSVNRSQDLDKVMSTLRGVGGVSVTSFPARCDGEEQTRISLNCTQKTLMQVLAFLSQDRQLYQKTEILSLEKPLLLHTGMGRLCTLDESVSLAIMIERIKTHLKLSHLRLALGVGRTLESQVKVVALCAGSGGSVLQGVEADLYLTGEMSHHDVLDAASKGINVILCEHSNTERGFLSELQEMLGVHFENKINIILSETDRDPLRVV</sequence>
<dbReference type="EMBL" id="AF284439">
    <property type="protein sequence ID" value="AAG45961.1"/>
    <property type="molecule type" value="mRNA"/>
</dbReference>
<dbReference type="EMBL" id="AK011670">
    <property type="protein sequence ID" value="BAB27769.1"/>
    <property type="molecule type" value="mRNA"/>
</dbReference>
<dbReference type="EMBL" id="AK154815">
    <property type="protein sequence ID" value="BAE32848.1"/>
    <property type="molecule type" value="mRNA"/>
</dbReference>
<dbReference type="EMBL" id="AK158616">
    <property type="protein sequence ID" value="BAE34583.1"/>
    <property type="molecule type" value="mRNA"/>
</dbReference>
<dbReference type="EMBL" id="CH466548">
    <property type="protein sequence ID" value="EDL00082.1"/>
    <property type="molecule type" value="Genomic_DNA"/>
</dbReference>
<dbReference type="EMBL" id="BC065163">
    <property type="protein sequence ID" value="AAH65163.1"/>
    <property type="molecule type" value="mRNA"/>
</dbReference>
<dbReference type="CCDS" id="CCDS14973.1"/>
<dbReference type="RefSeq" id="NP_075364.2">
    <property type="nucleotide sequence ID" value="NM_022988.3"/>
</dbReference>
<dbReference type="RefSeq" id="XP_006496249.1">
    <property type="nucleotide sequence ID" value="XM_006496186.2"/>
</dbReference>
<dbReference type="SMR" id="Q9EQ80"/>
<dbReference type="BioGRID" id="211128">
    <property type="interactions" value="13"/>
</dbReference>
<dbReference type="FunCoup" id="Q9EQ80">
    <property type="interactions" value="4238"/>
</dbReference>
<dbReference type="STRING" id="10090.ENSMUSP00000084799"/>
<dbReference type="GlyGen" id="Q9EQ80">
    <property type="glycosylation" value="1 site, 1 O-linked glycan (1 site)"/>
</dbReference>
<dbReference type="iPTMnet" id="Q9EQ80"/>
<dbReference type="PhosphoSitePlus" id="Q9EQ80"/>
<dbReference type="SwissPalm" id="Q9EQ80"/>
<dbReference type="jPOST" id="Q9EQ80"/>
<dbReference type="PaxDb" id="10090-ENSMUSP00000084799"/>
<dbReference type="PeptideAtlas" id="Q9EQ80"/>
<dbReference type="ProteomicsDB" id="293657"/>
<dbReference type="Pumba" id="Q9EQ80"/>
<dbReference type="Antibodypedia" id="34126">
    <property type="antibodies" value="317 antibodies from 30 providers"/>
</dbReference>
<dbReference type="DNASU" id="65102"/>
<dbReference type="Ensembl" id="ENSMUST00000087521.13">
    <property type="protein sequence ID" value="ENSMUSP00000084799.7"/>
    <property type="gene ID" value="ENSMUSG00000026036.18"/>
</dbReference>
<dbReference type="Ensembl" id="ENSMUST00000171597.2">
    <property type="protein sequence ID" value="ENSMUSP00000127501.2"/>
    <property type="gene ID" value="ENSMUSG00000026036.18"/>
</dbReference>
<dbReference type="GeneID" id="65102"/>
<dbReference type="KEGG" id="mmu:65102"/>
<dbReference type="UCSC" id="uc007bbz.1">
    <property type="organism name" value="mouse"/>
</dbReference>
<dbReference type="AGR" id="MGI:1929485"/>
<dbReference type="CTD" id="60491"/>
<dbReference type="MGI" id="MGI:1929485">
    <property type="gene designation" value="Nif3l1"/>
</dbReference>
<dbReference type="VEuPathDB" id="HostDB:ENSMUSG00000026036"/>
<dbReference type="eggNOG" id="KOG4131">
    <property type="taxonomic scope" value="Eukaryota"/>
</dbReference>
<dbReference type="GeneTree" id="ENSGT00390000003590"/>
<dbReference type="HOGENOM" id="CLU_037423_0_0_1"/>
<dbReference type="InParanoid" id="Q9EQ80"/>
<dbReference type="OMA" id="KYHEFFD"/>
<dbReference type="OrthoDB" id="3345469at2759"/>
<dbReference type="PhylomeDB" id="Q9EQ80"/>
<dbReference type="TreeFam" id="TF324125"/>
<dbReference type="BioGRID-ORCS" id="65102">
    <property type="hits" value="1 hit in 61 CRISPR screens"/>
</dbReference>
<dbReference type="ChiTaRS" id="Nif3l1">
    <property type="organism name" value="mouse"/>
</dbReference>
<dbReference type="PRO" id="PR:Q9EQ80"/>
<dbReference type="Proteomes" id="UP000000589">
    <property type="component" value="Chromosome 1"/>
</dbReference>
<dbReference type="RNAct" id="Q9EQ80">
    <property type="molecule type" value="protein"/>
</dbReference>
<dbReference type="Bgee" id="ENSMUSG00000026036">
    <property type="expression patterns" value="Expressed in ear vesicle and 256 other cell types or tissues"/>
</dbReference>
<dbReference type="ExpressionAtlas" id="Q9EQ80">
    <property type="expression patterns" value="baseline and differential"/>
</dbReference>
<dbReference type="GO" id="GO:0005737">
    <property type="term" value="C:cytoplasm"/>
    <property type="evidence" value="ECO:0000314"/>
    <property type="project" value="UniProtKB"/>
</dbReference>
<dbReference type="GO" id="GO:0005739">
    <property type="term" value="C:mitochondrion"/>
    <property type="evidence" value="ECO:0007005"/>
    <property type="project" value="MGI"/>
</dbReference>
<dbReference type="GO" id="GO:0005634">
    <property type="term" value="C:nucleus"/>
    <property type="evidence" value="ECO:0000314"/>
    <property type="project" value="UniProtKB"/>
</dbReference>
<dbReference type="GO" id="GO:0042802">
    <property type="term" value="F:identical protein binding"/>
    <property type="evidence" value="ECO:0007669"/>
    <property type="project" value="Ensembl"/>
</dbReference>
<dbReference type="GO" id="GO:0061629">
    <property type="term" value="F:RNA polymerase II-specific DNA-binding transcription factor binding"/>
    <property type="evidence" value="ECO:0007669"/>
    <property type="project" value="Ensembl"/>
</dbReference>
<dbReference type="GO" id="GO:0000122">
    <property type="term" value="P:negative regulation of transcription by RNA polymerase II"/>
    <property type="evidence" value="ECO:0000314"/>
    <property type="project" value="UniProtKB"/>
</dbReference>
<dbReference type="GO" id="GO:0030182">
    <property type="term" value="P:neuron differentiation"/>
    <property type="evidence" value="ECO:0000315"/>
    <property type="project" value="UniProtKB"/>
</dbReference>
<dbReference type="GO" id="GO:0045893">
    <property type="term" value="P:positive regulation of DNA-templated transcription"/>
    <property type="evidence" value="ECO:0007669"/>
    <property type="project" value="Ensembl"/>
</dbReference>
<dbReference type="FunFam" id="3.40.1390.30:FF:000001">
    <property type="entry name" value="GTP cyclohydrolase 1 type 2"/>
    <property type="match status" value="1"/>
</dbReference>
<dbReference type="FunFam" id="3.40.1390.30:FF:000004">
    <property type="entry name" value="NIF3-like protein 1"/>
    <property type="match status" value="1"/>
</dbReference>
<dbReference type="Gene3D" id="3.40.1390.30">
    <property type="entry name" value="NIF3 (NGG1p interacting factor 3)-like"/>
    <property type="match status" value="2"/>
</dbReference>
<dbReference type="InterPro" id="IPR002678">
    <property type="entry name" value="DUF34/NIF3"/>
</dbReference>
<dbReference type="InterPro" id="IPR017222">
    <property type="entry name" value="DUF34/NIF3_animal"/>
</dbReference>
<dbReference type="InterPro" id="IPR036069">
    <property type="entry name" value="DUF34/NIF3_sf"/>
</dbReference>
<dbReference type="NCBIfam" id="TIGR00486">
    <property type="entry name" value="YbgI_SA1388"/>
    <property type="match status" value="1"/>
</dbReference>
<dbReference type="PANTHER" id="PTHR13799">
    <property type="entry name" value="NGG1 INTERACTING FACTOR 3"/>
    <property type="match status" value="1"/>
</dbReference>
<dbReference type="PANTHER" id="PTHR13799:SF13">
    <property type="entry name" value="NIF3-LIKE PROTEIN 1"/>
    <property type="match status" value="1"/>
</dbReference>
<dbReference type="Pfam" id="PF01784">
    <property type="entry name" value="DUF34_NIF3"/>
    <property type="match status" value="1"/>
</dbReference>
<dbReference type="PIRSF" id="PIRSF037490">
    <property type="entry name" value="UCP037490_NIF3_euk"/>
    <property type="match status" value="1"/>
</dbReference>
<dbReference type="SUPFAM" id="SSF102705">
    <property type="entry name" value="NIF3 (NGG1p interacting factor 3)-like"/>
    <property type="match status" value="1"/>
</dbReference>
<organism>
    <name type="scientific">Mus musculus</name>
    <name type="common">Mouse</name>
    <dbReference type="NCBI Taxonomy" id="10090"/>
    <lineage>
        <taxon>Eukaryota</taxon>
        <taxon>Metazoa</taxon>
        <taxon>Chordata</taxon>
        <taxon>Craniata</taxon>
        <taxon>Vertebrata</taxon>
        <taxon>Euteleostomi</taxon>
        <taxon>Mammalia</taxon>
        <taxon>Eutheria</taxon>
        <taxon>Euarchontoglires</taxon>
        <taxon>Glires</taxon>
        <taxon>Rodentia</taxon>
        <taxon>Myomorpha</taxon>
        <taxon>Muroidea</taxon>
        <taxon>Muridae</taxon>
        <taxon>Murinae</taxon>
        <taxon>Mus</taxon>
        <taxon>Mus</taxon>
    </lineage>
</organism>
<name>NIF3L_MOUSE</name>
<gene>
    <name evidence="7" type="primary">Nif3l1</name>
</gene>
<reference key="1">
    <citation type="journal article" date="2000" name="Cytogenet. Cell Genet.">
        <title>Isolation and characterization of a novel human gene, NIF3L1, and its mouse ortholog, Nif3l1, highly conserved from bacteria to mammals.</title>
        <authorList>
            <person name="Tascou S."/>
            <person name="Uedelhoven J."/>
            <person name="Dixkens C."/>
            <person name="Nayernia K."/>
            <person name="Engel W."/>
            <person name="Burfeind P."/>
        </authorList>
    </citation>
    <scope>NUCLEOTIDE SEQUENCE [MRNA]</scope>
    <scope>TISSUE SPECIFICITY</scope>
</reference>
<reference key="2">
    <citation type="journal article" date="2005" name="Science">
        <title>The transcriptional landscape of the mammalian genome.</title>
        <authorList>
            <person name="Carninci P."/>
            <person name="Kasukawa T."/>
            <person name="Katayama S."/>
            <person name="Gough J."/>
            <person name="Frith M.C."/>
            <person name="Maeda N."/>
            <person name="Oyama R."/>
            <person name="Ravasi T."/>
            <person name="Lenhard B."/>
            <person name="Wells C."/>
            <person name="Kodzius R."/>
            <person name="Shimokawa K."/>
            <person name="Bajic V.B."/>
            <person name="Brenner S.E."/>
            <person name="Batalov S."/>
            <person name="Forrest A.R."/>
            <person name="Zavolan M."/>
            <person name="Davis M.J."/>
            <person name="Wilming L.G."/>
            <person name="Aidinis V."/>
            <person name="Allen J.E."/>
            <person name="Ambesi-Impiombato A."/>
            <person name="Apweiler R."/>
            <person name="Aturaliya R.N."/>
            <person name="Bailey T.L."/>
            <person name="Bansal M."/>
            <person name="Baxter L."/>
            <person name="Beisel K.W."/>
            <person name="Bersano T."/>
            <person name="Bono H."/>
            <person name="Chalk A.M."/>
            <person name="Chiu K.P."/>
            <person name="Choudhary V."/>
            <person name="Christoffels A."/>
            <person name="Clutterbuck D.R."/>
            <person name="Crowe M.L."/>
            <person name="Dalla E."/>
            <person name="Dalrymple B.P."/>
            <person name="de Bono B."/>
            <person name="Della Gatta G."/>
            <person name="di Bernardo D."/>
            <person name="Down T."/>
            <person name="Engstrom P."/>
            <person name="Fagiolini M."/>
            <person name="Faulkner G."/>
            <person name="Fletcher C.F."/>
            <person name="Fukushima T."/>
            <person name="Furuno M."/>
            <person name="Futaki S."/>
            <person name="Gariboldi M."/>
            <person name="Georgii-Hemming P."/>
            <person name="Gingeras T.R."/>
            <person name="Gojobori T."/>
            <person name="Green R.E."/>
            <person name="Gustincich S."/>
            <person name="Harbers M."/>
            <person name="Hayashi Y."/>
            <person name="Hensch T.K."/>
            <person name="Hirokawa N."/>
            <person name="Hill D."/>
            <person name="Huminiecki L."/>
            <person name="Iacono M."/>
            <person name="Ikeo K."/>
            <person name="Iwama A."/>
            <person name="Ishikawa T."/>
            <person name="Jakt M."/>
            <person name="Kanapin A."/>
            <person name="Katoh M."/>
            <person name="Kawasawa Y."/>
            <person name="Kelso J."/>
            <person name="Kitamura H."/>
            <person name="Kitano H."/>
            <person name="Kollias G."/>
            <person name="Krishnan S.P."/>
            <person name="Kruger A."/>
            <person name="Kummerfeld S.K."/>
            <person name="Kurochkin I.V."/>
            <person name="Lareau L.F."/>
            <person name="Lazarevic D."/>
            <person name="Lipovich L."/>
            <person name="Liu J."/>
            <person name="Liuni S."/>
            <person name="McWilliam S."/>
            <person name="Madan Babu M."/>
            <person name="Madera M."/>
            <person name="Marchionni L."/>
            <person name="Matsuda H."/>
            <person name="Matsuzawa S."/>
            <person name="Miki H."/>
            <person name="Mignone F."/>
            <person name="Miyake S."/>
            <person name="Morris K."/>
            <person name="Mottagui-Tabar S."/>
            <person name="Mulder N."/>
            <person name="Nakano N."/>
            <person name="Nakauchi H."/>
            <person name="Ng P."/>
            <person name="Nilsson R."/>
            <person name="Nishiguchi S."/>
            <person name="Nishikawa S."/>
            <person name="Nori F."/>
            <person name="Ohara O."/>
            <person name="Okazaki Y."/>
            <person name="Orlando V."/>
            <person name="Pang K.C."/>
            <person name="Pavan W.J."/>
            <person name="Pavesi G."/>
            <person name="Pesole G."/>
            <person name="Petrovsky N."/>
            <person name="Piazza S."/>
            <person name="Reed J."/>
            <person name="Reid J.F."/>
            <person name="Ring B.Z."/>
            <person name="Ringwald M."/>
            <person name="Rost B."/>
            <person name="Ruan Y."/>
            <person name="Salzberg S.L."/>
            <person name="Sandelin A."/>
            <person name="Schneider C."/>
            <person name="Schoenbach C."/>
            <person name="Sekiguchi K."/>
            <person name="Semple C.A."/>
            <person name="Seno S."/>
            <person name="Sessa L."/>
            <person name="Sheng Y."/>
            <person name="Shibata Y."/>
            <person name="Shimada H."/>
            <person name="Shimada K."/>
            <person name="Silva D."/>
            <person name="Sinclair B."/>
            <person name="Sperling S."/>
            <person name="Stupka E."/>
            <person name="Sugiura K."/>
            <person name="Sultana R."/>
            <person name="Takenaka Y."/>
            <person name="Taki K."/>
            <person name="Tammoja K."/>
            <person name="Tan S.L."/>
            <person name="Tang S."/>
            <person name="Taylor M.S."/>
            <person name="Tegner J."/>
            <person name="Teichmann S.A."/>
            <person name="Ueda H.R."/>
            <person name="van Nimwegen E."/>
            <person name="Verardo R."/>
            <person name="Wei C.L."/>
            <person name="Yagi K."/>
            <person name="Yamanishi H."/>
            <person name="Zabarovsky E."/>
            <person name="Zhu S."/>
            <person name="Zimmer A."/>
            <person name="Hide W."/>
            <person name="Bult C."/>
            <person name="Grimmond S.M."/>
            <person name="Teasdale R.D."/>
            <person name="Liu E.T."/>
            <person name="Brusic V."/>
            <person name="Quackenbush J."/>
            <person name="Wahlestedt C."/>
            <person name="Mattick J.S."/>
            <person name="Hume D.A."/>
            <person name="Kai C."/>
            <person name="Sasaki D."/>
            <person name="Tomaru Y."/>
            <person name="Fukuda S."/>
            <person name="Kanamori-Katayama M."/>
            <person name="Suzuki M."/>
            <person name="Aoki J."/>
            <person name="Arakawa T."/>
            <person name="Iida J."/>
            <person name="Imamura K."/>
            <person name="Itoh M."/>
            <person name="Kato T."/>
            <person name="Kawaji H."/>
            <person name="Kawagashira N."/>
            <person name="Kawashima T."/>
            <person name="Kojima M."/>
            <person name="Kondo S."/>
            <person name="Konno H."/>
            <person name="Nakano K."/>
            <person name="Ninomiya N."/>
            <person name="Nishio T."/>
            <person name="Okada M."/>
            <person name="Plessy C."/>
            <person name="Shibata K."/>
            <person name="Shiraki T."/>
            <person name="Suzuki S."/>
            <person name="Tagami M."/>
            <person name="Waki K."/>
            <person name="Watahiki A."/>
            <person name="Okamura-Oho Y."/>
            <person name="Suzuki H."/>
            <person name="Kawai J."/>
            <person name="Hayashizaki Y."/>
        </authorList>
    </citation>
    <scope>NUCLEOTIDE SEQUENCE [LARGE SCALE MRNA]</scope>
    <source>
        <strain>C57BL/6J</strain>
        <strain>NOD</strain>
        <tissue>Embryo</tissue>
        <tissue>Visual cortex</tissue>
    </source>
</reference>
<reference key="3">
    <citation type="submission" date="2005-07" db="EMBL/GenBank/DDBJ databases">
        <authorList>
            <person name="Mural R.J."/>
            <person name="Adams M.D."/>
            <person name="Myers E.W."/>
            <person name="Smith H.O."/>
            <person name="Venter J.C."/>
        </authorList>
    </citation>
    <scope>NUCLEOTIDE SEQUENCE [LARGE SCALE GENOMIC DNA]</scope>
</reference>
<reference key="4">
    <citation type="journal article" date="2004" name="Genome Res.">
        <title>The status, quality, and expansion of the NIH full-length cDNA project: the Mammalian Gene Collection (MGC).</title>
        <authorList>
            <consortium name="The MGC Project Team"/>
        </authorList>
    </citation>
    <scope>NUCLEOTIDE SEQUENCE [LARGE SCALE MRNA]</scope>
    <source>
        <strain>C57BL/6J</strain>
        <tissue>Brain</tissue>
    </source>
</reference>
<reference key="5">
    <citation type="journal article" date="2003" name="Biochem. Biophys. Res. Commun.">
        <title>Identification and characterization of NIF3L1 BP1, a novel cytoplasmic interaction partner of the NIF3L1 protein.</title>
        <authorList>
            <person name="Tascou S."/>
            <person name="Kang T.W."/>
            <person name="Trappe R."/>
            <person name="Engel W."/>
            <person name="Burfeind P."/>
        </authorList>
    </citation>
    <scope>INTERACTION WITH THOC7</scope>
</reference>
<reference key="6">
    <citation type="journal article" date="2003" name="J. Biol. Chem.">
        <title>The role of transcriptional corepressor Nif3l1 in early stage of neural differentiation via cooperation with Trip15/CSN2.</title>
        <authorList>
            <person name="Akiyama H."/>
            <person name="Fujisawa N."/>
            <person name="Tashiro Y."/>
            <person name="Takanabe N."/>
            <person name="Sugiyama A."/>
            <person name="Tashiro F."/>
        </authorList>
    </citation>
    <scope>FUNCTION</scope>
    <scope>INTERACTION WITH COPS2</scope>
    <scope>REGION</scope>
    <scope>SUBCELLULAR LOCATION</scope>
    <scope>TISSUE SPECIFICITY</scope>
    <scope>DEVELOPMENTAL STAGE</scope>
</reference>
<reference key="7">
    <citation type="journal article" date="2010" name="Cell">
        <title>A tissue-specific atlas of mouse protein phosphorylation and expression.</title>
        <authorList>
            <person name="Huttlin E.L."/>
            <person name="Jedrychowski M.P."/>
            <person name="Elias J.E."/>
            <person name="Goswami T."/>
            <person name="Rad R."/>
            <person name="Beausoleil S.A."/>
            <person name="Villen J."/>
            <person name="Haas W."/>
            <person name="Sowa M.E."/>
            <person name="Gygi S.P."/>
        </authorList>
    </citation>
    <scope>PHOSPHORYLATION [LARGE SCALE ANALYSIS] AT THR-254 AND SER-258</scope>
    <scope>IDENTIFICATION BY MASS SPECTROMETRY [LARGE SCALE ANALYSIS]</scope>
    <source>
        <tissue>Brain</tissue>
        <tissue>Brown adipose tissue</tissue>
        <tissue>Heart</tissue>
        <tissue>Kidney</tissue>
        <tissue>Liver</tissue>
        <tissue>Lung</tissue>
        <tissue>Pancreas</tissue>
        <tissue>Spleen</tissue>
        <tissue>Testis</tissue>
    </source>
</reference>
<keyword id="KW-0007">Acetylation</keyword>
<keyword id="KW-0963">Cytoplasm</keyword>
<keyword id="KW-0539">Nucleus</keyword>
<keyword id="KW-0597">Phosphoprotein</keyword>
<keyword id="KW-1185">Reference proteome</keyword>
<comment type="function">
    <text evidence="3">May function as a transcriptional corepressor through its interaction with COPS2, negatively regulating the expression of genes involved in neuronal differentiation.</text>
</comment>
<comment type="subunit">
    <text evidence="1 3 4">Homodimer (By similarity). Interacts with COPS2 (PubMed:12522100). Interacts with THOC7 (PubMed:12951069).</text>
</comment>
<comment type="subcellular location">
    <subcellularLocation>
        <location evidence="3">Cytoplasm</location>
    </subcellularLocation>
    <subcellularLocation>
        <location evidence="3">Nucleus</location>
    </subcellularLocation>
    <text evidence="3">Interaction with COPS2 may regulate localization to the nucleus.</text>
</comment>
<comment type="tissue specificity">
    <text evidence="2 3">Ubiquitous. Detected in all tissues tested with higher expression in cerebellum, heart and kidney and to a lower level in cerebrum, lung, liver, spleen and muscle.</text>
</comment>
<comment type="developmental stage">
    <text evidence="3">Expressed in the developing brain from 10.5 dpc until 14.5 dpc. The expression decreases after 16.5 dpc, but an up-regulation is observed at P5 and the expression remains constant thereafter.</text>
</comment>
<comment type="similarity">
    <text evidence="5">Belongs to the GTP cyclohydrolase I type 2/NIF3 family.</text>
</comment>
<accession>Q9EQ80</accession>
<accession>Q6P1B7</accession>
<accession>Q9D098</accession>
<protein>
    <recommendedName>
        <fullName evidence="6">NIF3-like protein 1</fullName>
    </recommendedName>
</protein>